<reference key="1">
    <citation type="submission" date="2006-08" db="EMBL/GenBank/DDBJ databases">
        <authorList>
            <person name="Zhao Y.J."/>
            <person name="Guo L."/>
            <person name="Huang Y."/>
            <person name="Qian A.D."/>
        </authorList>
    </citation>
    <scope>NUCLEOTIDE SEQUENCE [GENOMIC RNA]</scope>
</reference>
<proteinExistence type="inferred from homology"/>
<keyword id="KW-0067">ATP-binding</keyword>
<keyword id="KW-1035">Host cytoplasm</keyword>
<keyword id="KW-0378">Hydrolase</keyword>
<keyword id="KW-0489">Methyltransferase</keyword>
<keyword id="KW-0506">mRNA capping</keyword>
<keyword id="KW-0507">mRNA processing</keyword>
<keyword id="KW-0511">Multifunctional enzyme</keyword>
<keyword id="KW-0547">Nucleotide-binding</keyword>
<keyword id="KW-0548">Nucleotidyltransferase</keyword>
<keyword id="KW-0696">RNA-directed RNA polymerase</keyword>
<keyword id="KW-0949">S-adenosyl-L-methionine</keyword>
<keyword id="KW-0808">Transferase</keyword>
<keyword id="KW-0693">Viral RNA replication</keyword>
<keyword id="KW-0946">Virion</keyword>
<organismHost>
    <name type="scientific">Homo sapiens</name>
    <name type="common">Human</name>
    <dbReference type="NCBI Taxonomy" id="9606"/>
</organismHost>
<organismHost>
    <name type="scientific">Mammalia</name>
    <dbReference type="NCBI Taxonomy" id="40674"/>
</organismHost>
<protein>
    <recommendedName>
        <fullName>Large structural protein</fullName>
        <shortName>Protein L</shortName>
    </recommendedName>
    <alternativeName>
        <fullName>Replicase</fullName>
    </alternativeName>
    <alternativeName>
        <fullName>Transcriptase</fullName>
    </alternativeName>
    <domain>
        <recommendedName>
            <fullName>RNA-directed RNA polymerase</fullName>
            <ecNumber evidence="3">2.7.7.48</ecNumber>
        </recommendedName>
    </domain>
    <domain>
        <recommendedName>
            <fullName evidence="2">GTP phosphohydrolase</fullName>
            <ecNumber evidence="2">3.6.1.-</ecNumber>
        </recommendedName>
    </domain>
    <domain>
        <recommendedName>
            <fullName evidence="7">GDP polyribonucleotidyltransferase</fullName>
            <ecNumber evidence="2">2.7.7.88</ecNumber>
        </recommendedName>
        <alternativeName>
            <fullName evidence="7">PRNTase</fullName>
        </alternativeName>
    </domain>
    <domain>
        <recommendedName>
            <fullName evidence="7">mRNA cap methyltransferase</fullName>
            <ecNumber evidence="2">2.1.1.375</ecNumber>
        </recommendedName>
        <alternativeName>
            <fullName evidence="2">mRNA (guanine-N(7)-)-methyltransferase</fullName>
            <shortName evidence="2">G-N7-MTase</shortName>
        </alternativeName>
        <alternativeName>
            <fullName evidence="2">mRNA (nucleoside-2'-O-)-methyltransferase</fullName>
            <shortName evidence="2">N1-2'-O-MTase</shortName>
        </alternativeName>
    </domain>
</protein>
<organism>
    <name type="scientific">Rabies virus (strain China/MRV)</name>
    <name type="common">RABV</name>
    <dbReference type="NCBI Taxonomy" id="445791"/>
    <lineage>
        <taxon>Viruses</taxon>
        <taxon>Riboviria</taxon>
        <taxon>Orthornavirae</taxon>
        <taxon>Negarnaviricota</taxon>
        <taxon>Haploviricotina</taxon>
        <taxon>Monjiviricetes</taxon>
        <taxon>Mononegavirales</taxon>
        <taxon>Rhabdoviridae</taxon>
        <taxon>Alpharhabdovirinae</taxon>
        <taxon>Lyssavirus</taxon>
        <taxon>Lyssavirus rabies</taxon>
    </lineage>
</organism>
<feature type="chain" id="PRO_0000294424" description="Large structural protein">
    <location>
        <begin position="1"/>
        <end position="2127"/>
    </location>
</feature>
<feature type="domain" description="RdRp catalytic" evidence="4">
    <location>
        <begin position="611"/>
        <end position="799"/>
    </location>
</feature>
<feature type="domain" description="Mononegavirus-type SAM-dependent 2'-O-MTase" evidence="5">
    <location>
        <begin position="1674"/>
        <end position="1871"/>
    </location>
</feature>
<feature type="region of interest" description="Disordered" evidence="6">
    <location>
        <begin position="1"/>
        <end position="27"/>
    </location>
</feature>
<feature type="region of interest" description="Interaction with P protein" evidence="1">
    <location>
        <begin position="1562"/>
        <end position="2127"/>
    </location>
</feature>
<feature type="compositionally biased region" description="Acidic residues" evidence="6">
    <location>
        <begin position="1"/>
        <end position="18"/>
    </location>
</feature>
<accession>Q0GBY0</accession>
<name>L_RABVR</name>
<gene>
    <name type="primary">L</name>
</gene>
<evidence type="ECO:0000250" key="1"/>
<evidence type="ECO:0000250" key="2">
    <source>
        <dbReference type="UniProtKB" id="P03523"/>
    </source>
</evidence>
<evidence type="ECO:0000250" key="3">
    <source>
        <dbReference type="UniProtKB" id="P28887"/>
    </source>
</evidence>
<evidence type="ECO:0000255" key="4">
    <source>
        <dbReference type="PROSITE-ProRule" id="PRU00539"/>
    </source>
</evidence>
<evidence type="ECO:0000255" key="5">
    <source>
        <dbReference type="PROSITE-ProRule" id="PRU00923"/>
    </source>
</evidence>
<evidence type="ECO:0000256" key="6">
    <source>
        <dbReference type="SAM" id="MobiDB-lite"/>
    </source>
</evidence>
<evidence type="ECO:0000305" key="7"/>
<sequence length="2127" mass="242747">MLDPGEVYDDPIDPIESEAEPRGTPTVPNILRNSDYNLNSPLIEDPAKLMLEWLKTGNRPYRMTLTDNCSRSYKVLKDYFKKVDLGSLKVGGTAAQSMVSLWLCGAHSESNRSRRCITDLAHFYSKSSPIEKLLNCTLGNRGLRIPPEGVLNCLERVNYDKAFGRYLANTYSSYLFFHVITLYMNALDWEEEKTILALWKDITSVDTEKDLVKFKDQIWGLLIVTKDFVYSQSSNCLFDRNYTLMLKDLFLSRFNSLMILLSPPEPRCSDDLISQLCQLYIAGDQVLSMCGNSGYEVIKILEPYVVNSLVQRAEKFRPLIHPLGDFPMFIKDKVNQLEGTFGPSAKRFFRVLDQFDNIHDLVFVYGCYRHWGHPYIDYRKGLSKLYDQVHIKKVIDKSYQECSASDLARRILRWGFDKYSKWYLDSRFLARDHPLTPYVKTQTWPPKHIVDLVGDTWHKLPITQIFEIPESMDPSEILDDKSHSFTRTRLASWLSENRGGPVPSEKVIITALSKPPVNPREFLKSIDLGGLPDEDLIIGLKTKERELKIEGRFFALMSWNLRLYFVITGKLLANYILPLFDALTMTDNLNKVFKKLIDRVTGQGLLDYSRVTYAFHLDYEKWNNHQRLESTEDVFSVLDQVFGLKRVFSRTHEFFQKSWIYYSDRSDLIGLWEDQIYCLDMSNGPTCWNGQDGGLEGLRQKGWSLVSLLMIDRESQTRNTRTKILAQGDNQVLCPTYMLSPGLSQEGLLYELESISRNALSIYRAIEEGASKLGLIIKKEETMCSYDFLIYGKTPLFRGNILVPESKRWARVSCISNDQIVNLANIMSTVSTNALTVAQHSQSLIKPMRDFLLMSVQAVFHYLLFSPILKGRVYKILSAEGESFLLAMSRIIYLDPSLGGVSGMSLGRFHIRQFSDPVSEGLSFWREIWLGSHESWIHALCQEAGNPDLGERTLESFTRLLEDPTTLNIKGGASPTILLKDAIRKALYDEVDKVENSEFREAILLSKTHRDNFILFLKSVEPLFPRFLSELFSSSFLGIPESIIGLIQNSRTIRRQFRKSLSRTLEESFYNSEIHGINRITQTPQRVGRVWPCSSERADLLREISWGRKVVGTTVPHPSEMLELFPKSSISCTCGATGGGNPRVSVSVLPSFDQSFFSRGPLKGYLGSSTSMSTQLFHAWEKVTNVHVVKRALSLKESINWFINRNSNLAQTLIGNIMSLTGPDFPLEEAPVFKRTGSALHRFKSARYSEGGYSSVCPNLLSHISVSTDTMSDLTQNGKNYDFMFQPLMLYAQTWTSELVQRDTRLRDSTFHWHLRCNRCVRPIDDITLETSQIFEFPDVSKRISRMVSGAVPQFQKLPDIRLRPGDFESLSGREKSRHIGSAQGLLYSILVAIHDSGYNDGTIFPVNIYGKVSPRDYLRGLARGILIGSSICFLTRMTNININRPLELISGVISYILLRLDNHPSLYIMLREPSLRGEIFSIPQKIPAAYPTTMREGNRSILCYLQHVLRYEREAITASPENDWLWIFSDFRSVKMTYLTLITYQSHLLLQRVERNLSKSMRATLRQMGSLMRQVLGGHGEDTLESDDDIQRLLKDSLRKTRWVDQEVRHAARTMNGDYSPDKKVSRKVGCSEWVCSAQQIAVSTSANPAPVSELDIRALSKRFQNPLISGLRVVQWATGAHYKLKPILDDLNVFPSLCLVIGDGSGGISRAVLNMFPDSKLVFNSLLEVNDLMASGTHPLPPSAIMSGGDDIISRVIDFDSIWEKPSDLRNSATWRYFQSVQKQVNMSYDLIICDAEVTDIASINRITLLMSDFALSIDGPLYLVFKTYGTMLVNPDYKAIQHLSRAFPSVTGFVTQVTSSFSSELYLRFSKRGKFFRDAEYLTSSTLREMSLVLFNCSSPKSEMQRARSLNYQDLVRGFPEEIISNPYNEMIITLIDNDVESFLVHKMVDDLELQRGTLSKVAIIISIMIVFSNRVFNISKPLTDPLFYPPSDPKILRHFNICCSTMMYLSTALGDVPNFARLHDLYNRPITCYFRKQVIRGNIYLSWSWSDDTPVFKRVACNSSLSLSSHWIRLIYKIVKTTRLIGSIKDLSGEVERHLHGYNRWITLEDIRSRSSLLDYSCL</sequence>
<comment type="function">
    <text evidence="2">RNA-directed RNA polymerase that catalyzes the transcription of viral mRNAs, their capping and polyadenylation. The template is composed of the viral RNA tightly encapsidated by the nucleoprotein (N). The viral polymerase binds to the genomic RNA at the 3' leader promoter, and transcribes subsequently all viral mRNAs with a decreasing efficiency. The first gene is the most transcribed, and the last the least transcribed. The viral phosphoprotein acts as a processivity factor. Capping is concomitant with initiation of mRNA transcription. Indeed, a GDP polyribonucleotidyl transferase (PRNTase) adds the cap structure when the nascent RNA chain length has reached few nucleotides. Ribose 2'-O methylation of viral mRNA cap precedes and facilitates subsequent guanine-N-7 methylation, both activities being carried by the viral polymerase. Polyadenylation of mRNAs occur by a stuttering mechanism at a slipery stop site present at the end viral genes. After finishing transcription of a mRNA, the polymerase can resume transcription of the downstream gene.</text>
</comment>
<comment type="function">
    <text evidence="2">RNA-directed RNA polymerase that catalyzes the replication of viral genomic RNA. The template is composed of the viral RNA tightly encapsidated by the nucleoprotein (N). The replicase mode is dependent on intracellular N protein concentration. In this mode, the polymerase replicates the whole viral genome without recognizing transcriptional signals, and the replicated genome is not caped or polyadenylated.</text>
</comment>
<comment type="catalytic activity">
    <reaction evidence="4">
        <text>RNA(n) + a ribonucleoside 5'-triphosphate = RNA(n+1) + diphosphate</text>
        <dbReference type="Rhea" id="RHEA:21248"/>
        <dbReference type="Rhea" id="RHEA-COMP:14527"/>
        <dbReference type="Rhea" id="RHEA-COMP:17342"/>
        <dbReference type="ChEBI" id="CHEBI:33019"/>
        <dbReference type="ChEBI" id="CHEBI:61557"/>
        <dbReference type="ChEBI" id="CHEBI:140395"/>
        <dbReference type="EC" id="2.7.7.48"/>
    </reaction>
</comment>
<comment type="catalytic activity">
    <reaction evidence="2">
        <text>a 5'-end (5'-triphosphoguanosine)-adenylyl-adenylyl-cytidylyl-adenosine in mRNA + 2 S-adenosyl-L-methionine = a 5'-end (N(7)-methyl 5'-triphosphoguanosine)-(2'-O-methyladenylyl)-adenylyl-cytidylyl-adenosine in mRNA + 2 S-adenosyl-L-homocysteine + H(+)</text>
        <dbReference type="Rhea" id="RHEA:65376"/>
        <dbReference type="Rhea" id="RHEA-COMP:16797"/>
        <dbReference type="Rhea" id="RHEA-COMP:16798"/>
        <dbReference type="ChEBI" id="CHEBI:15378"/>
        <dbReference type="ChEBI" id="CHEBI:57856"/>
        <dbReference type="ChEBI" id="CHEBI:59789"/>
        <dbReference type="ChEBI" id="CHEBI:156483"/>
        <dbReference type="ChEBI" id="CHEBI:156484"/>
        <dbReference type="EC" id="2.1.1.375"/>
    </reaction>
</comment>
<comment type="catalytic activity">
    <reaction evidence="2">
        <text>a 5'-end (5'-triphosphoguanosine)-adenylyl-adenylyl-cytidylyl-adenosine in mRNA + S-adenosyl-L-methionine = a 5'-end (5'-triphosphoguanosine)-(2'-O-methyladenylyl)-adenylyl-cytidylyl-adenosine in mRNA + S-adenosyl-L-homocysteine + H(+)</text>
        <dbReference type="Rhea" id="RHEA:65380"/>
        <dbReference type="Rhea" id="RHEA-COMP:16797"/>
        <dbReference type="Rhea" id="RHEA-COMP:16801"/>
        <dbReference type="ChEBI" id="CHEBI:15378"/>
        <dbReference type="ChEBI" id="CHEBI:57856"/>
        <dbReference type="ChEBI" id="CHEBI:59789"/>
        <dbReference type="ChEBI" id="CHEBI:156482"/>
        <dbReference type="ChEBI" id="CHEBI:156484"/>
    </reaction>
</comment>
<comment type="catalytic activity">
    <reaction evidence="3">
        <text>a 5'-end triphospho-adenylyl-adenylyl-cytidylyl-adenosine in mRNA + GDP + H(+) = a 5'-end (5'-triphosphoguanosine)-adenylyl-adenylyl-cytidylyl-adenosine in mRNA + diphosphate</text>
        <dbReference type="Rhea" id="RHEA:65436"/>
        <dbReference type="Rhea" id="RHEA-COMP:16797"/>
        <dbReference type="Rhea" id="RHEA-COMP:16799"/>
        <dbReference type="ChEBI" id="CHEBI:15378"/>
        <dbReference type="ChEBI" id="CHEBI:33019"/>
        <dbReference type="ChEBI" id="CHEBI:58189"/>
        <dbReference type="ChEBI" id="CHEBI:156484"/>
        <dbReference type="ChEBI" id="CHEBI:156503"/>
        <dbReference type="EC" id="2.7.7.88"/>
    </reaction>
</comment>
<comment type="catalytic activity">
    <reaction evidence="2">
        <text>a 5'-end (5'-triphosphoguanosine)-(2'-O-methyladenylyl)-adenylyl-cytidylyl-adenosine in mRNA + S-adenosyl-L-methionine = a 5'-end (N(7)-methyl 5'-triphosphoguanosine)-(2'-O-methyladenylyl)-adenylyl-cytidylyl-adenosine in mRNA + S-adenosyl-L-homocysteine</text>
        <dbReference type="Rhea" id="RHEA:65440"/>
        <dbReference type="Rhea" id="RHEA-COMP:16798"/>
        <dbReference type="Rhea" id="RHEA-COMP:16801"/>
        <dbReference type="ChEBI" id="CHEBI:57856"/>
        <dbReference type="ChEBI" id="CHEBI:59789"/>
        <dbReference type="ChEBI" id="CHEBI:156482"/>
        <dbReference type="ChEBI" id="CHEBI:156483"/>
    </reaction>
</comment>
<comment type="catalytic activity">
    <reaction evidence="3">
        <text>GTP + H2O = GDP + phosphate + H(+)</text>
        <dbReference type="Rhea" id="RHEA:19669"/>
        <dbReference type="ChEBI" id="CHEBI:15377"/>
        <dbReference type="ChEBI" id="CHEBI:15378"/>
        <dbReference type="ChEBI" id="CHEBI:37565"/>
        <dbReference type="ChEBI" id="CHEBI:43474"/>
        <dbReference type="ChEBI" id="CHEBI:58189"/>
    </reaction>
</comment>
<comment type="subunit">
    <text evidence="2">May form homodimer. Interacts with the P protein.</text>
</comment>
<comment type="subcellular location">
    <subcellularLocation>
        <location evidence="2">Virion</location>
    </subcellularLocation>
    <subcellularLocation>
        <location evidence="2">Host cytoplasm</location>
    </subcellularLocation>
    <text evidence="2">L and P are packaged asymmetrically towards the blunt end of the virus.</text>
</comment>
<comment type="similarity">
    <text evidence="7">Belongs to the rhabdoviruses protein L family.</text>
</comment>
<dbReference type="EC" id="2.7.7.48" evidence="3"/>
<dbReference type="EC" id="3.6.1.-" evidence="2"/>
<dbReference type="EC" id="2.7.7.88" evidence="2"/>
<dbReference type="EC" id="2.1.1.375" evidence="2"/>
<dbReference type="EMBL" id="DQ875050">
    <property type="protein sequence ID" value="ABI47941.1"/>
    <property type="molecule type" value="Other_RNA"/>
</dbReference>
<dbReference type="SMR" id="Q0GBY0"/>
<dbReference type="Proteomes" id="UP000008650">
    <property type="component" value="Genome"/>
</dbReference>
<dbReference type="GO" id="GO:0030430">
    <property type="term" value="C:host cell cytoplasm"/>
    <property type="evidence" value="ECO:0007669"/>
    <property type="project" value="UniProtKB-SubCell"/>
</dbReference>
<dbReference type="GO" id="GO:0044423">
    <property type="term" value="C:virion component"/>
    <property type="evidence" value="ECO:0007669"/>
    <property type="project" value="UniProtKB-KW"/>
</dbReference>
<dbReference type="GO" id="GO:0005524">
    <property type="term" value="F:ATP binding"/>
    <property type="evidence" value="ECO:0007669"/>
    <property type="project" value="UniProtKB-KW"/>
</dbReference>
<dbReference type="GO" id="GO:0003924">
    <property type="term" value="F:GTPase activity"/>
    <property type="evidence" value="ECO:0007669"/>
    <property type="project" value="RHEA"/>
</dbReference>
<dbReference type="GO" id="GO:0004482">
    <property type="term" value="F:mRNA 5'-cap (guanine-N7-)-methyltransferase activity"/>
    <property type="evidence" value="ECO:0007669"/>
    <property type="project" value="InterPro"/>
</dbReference>
<dbReference type="GO" id="GO:0003968">
    <property type="term" value="F:RNA-directed RNA polymerase activity"/>
    <property type="evidence" value="ECO:0007669"/>
    <property type="project" value="UniProtKB-KW"/>
</dbReference>
<dbReference type="GO" id="GO:0039689">
    <property type="term" value="P:negative stranded viral RNA replication"/>
    <property type="evidence" value="ECO:0000250"/>
    <property type="project" value="UniProtKB"/>
</dbReference>
<dbReference type="InterPro" id="IPR039530">
    <property type="entry name" value="L_methyltransferase_rhabdo"/>
</dbReference>
<dbReference type="InterPro" id="IPR039736">
    <property type="entry name" value="L_poly_C"/>
</dbReference>
<dbReference type="InterPro" id="IPR048398">
    <property type="entry name" value="Methyltrans_Mon_C"/>
</dbReference>
<dbReference type="InterPro" id="IPR048397">
    <property type="entry name" value="Methyltrans_Mon_CD"/>
</dbReference>
<dbReference type="InterPro" id="IPR026890">
    <property type="entry name" value="Mononeg_mRNAcap"/>
</dbReference>
<dbReference type="InterPro" id="IPR014023">
    <property type="entry name" value="Mononeg_RNA_pol_cat"/>
</dbReference>
<dbReference type="InterPro" id="IPR025786">
    <property type="entry name" value="Mononega_L_MeTrfase"/>
</dbReference>
<dbReference type="InterPro" id="IPR017234">
    <property type="entry name" value="RNA-dir_pol_rhabdovirus"/>
</dbReference>
<dbReference type="NCBIfam" id="TIGR04198">
    <property type="entry name" value="paramyx_RNAcap"/>
    <property type="match status" value="1"/>
</dbReference>
<dbReference type="Pfam" id="PF21080">
    <property type="entry name" value="Methyltrans_Mon_1st"/>
    <property type="match status" value="1"/>
</dbReference>
<dbReference type="Pfam" id="PF14314">
    <property type="entry name" value="Methyltrans_Mon_2nd"/>
    <property type="match status" value="1"/>
</dbReference>
<dbReference type="Pfam" id="PF21081">
    <property type="entry name" value="Methyltrans_Mon_3rd"/>
    <property type="match status" value="1"/>
</dbReference>
<dbReference type="Pfam" id="PF14318">
    <property type="entry name" value="Mononeg_mRNAcap"/>
    <property type="match status" value="1"/>
</dbReference>
<dbReference type="Pfam" id="PF00946">
    <property type="entry name" value="Mononeg_RNA_pol"/>
    <property type="match status" value="1"/>
</dbReference>
<dbReference type="PIRSF" id="PIRSF037546">
    <property type="entry name" value="RNA_pol_RhabdoV_sub"/>
    <property type="match status" value="1"/>
</dbReference>
<dbReference type="PROSITE" id="PS50526">
    <property type="entry name" value="RDRP_SSRNA_NEG_NONSEG"/>
    <property type="match status" value="1"/>
</dbReference>
<dbReference type="PROSITE" id="PS51590">
    <property type="entry name" value="SAM_MT_MNV_L"/>
    <property type="match status" value="1"/>
</dbReference>